<dbReference type="EC" id="3.4.24.-" evidence="2"/>
<dbReference type="EMBL" id="Z74039">
    <property type="protein sequence ID" value="CAA98504.2"/>
    <property type="molecule type" value="Genomic_DNA"/>
</dbReference>
<dbReference type="EMBL" id="AJ561209">
    <property type="protein sequence ID" value="CAD99211.1"/>
    <property type="molecule type" value="mRNA"/>
</dbReference>
<dbReference type="PIR" id="T23266">
    <property type="entry name" value="T23266"/>
</dbReference>
<dbReference type="RefSeq" id="NP_505893.2">
    <property type="nucleotide sequence ID" value="NM_073492.4"/>
</dbReference>
<dbReference type="SMR" id="Q21181"/>
<dbReference type="FunCoup" id="Q21181">
    <property type="interactions" value="1"/>
</dbReference>
<dbReference type="STRING" id="6239.K03B8.5.1"/>
<dbReference type="MEROPS" id="M12.A33"/>
<dbReference type="GlyCosmos" id="Q21181">
    <property type="glycosylation" value="2 sites, No reported glycans"/>
</dbReference>
<dbReference type="PaxDb" id="6239-K03B8.5"/>
<dbReference type="PeptideAtlas" id="Q21181"/>
<dbReference type="EnsemblMetazoa" id="K03B8.5.1">
    <property type="protein sequence ID" value="K03B8.5.1"/>
    <property type="gene ID" value="WBGene00003538"/>
</dbReference>
<dbReference type="GeneID" id="186926"/>
<dbReference type="KEGG" id="cel:CELE_K03B8.5"/>
<dbReference type="UCSC" id="K03B8.5">
    <property type="organism name" value="c. elegans"/>
</dbReference>
<dbReference type="AGR" id="WB:WBGene00003538"/>
<dbReference type="CTD" id="186926"/>
<dbReference type="WormBase" id="K03B8.5">
    <property type="protein sequence ID" value="CE47588"/>
    <property type="gene ID" value="WBGene00003538"/>
    <property type="gene designation" value="nas-19"/>
</dbReference>
<dbReference type="eggNOG" id="KOG3714">
    <property type="taxonomic scope" value="Eukaryota"/>
</dbReference>
<dbReference type="GeneTree" id="ENSGT00940000169788"/>
<dbReference type="HOGENOM" id="CLU_017286_1_1_1"/>
<dbReference type="InParanoid" id="Q21181"/>
<dbReference type="OMA" id="FIRRETC"/>
<dbReference type="OrthoDB" id="291007at2759"/>
<dbReference type="PhylomeDB" id="Q21181"/>
<dbReference type="PRO" id="PR:Q21181"/>
<dbReference type="Proteomes" id="UP000001940">
    <property type="component" value="Chromosome V"/>
</dbReference>
<dbReference type="Bgee" id="WBGene00003538">
    <property type="expression patterns" value="Expressed in material anatomical entity and 1 other cell type or tissue"/>
</dbReference>
<dbReference type="GO" id="GO:0005576">
    <property type="term" value="C:extracellular region"/>
    <property type="evidence" value="ECO:0007669"/>
    <property type="project" value="UniProtKB-SubCell"/>
</dbReference>
<dbReference type="GO" id="GO:0004222">
    <property type="term" value="F:metalloendopeptidase activity"/>
    <property type="evidence" value="ECO:0000318"/>
    <property type="project" value="GO_Central"/>
</dbReference>
<dbReference type="GO" id="GO:0008270">
    <property type="term" value="F:zinc ion binding"/>
    <property type="evidence" value="ECO:0007669"/>
    <property type="project" value="InterPro"/>
</dbReference>
<dbReference type="GO" id="GO:0018996">
    <property type="term" value="P:molting cycle, collagen and cuticulin-based cuticle"/>
    <property type="evidence" value="ECO:0007669"/>
    <property type="project" value="InterPro"/>
</dbReference>
<dbReference type="GO" id="GO:0006508">
    <property type="term" value="P:proteolysis"/>
    <property type="evidence" value="ECO:0007669"/>
    <property type="project" value="UniProtKB-KW"/>
</dbReference>
<dbReference type="FunFam" id="3.40.390.10:FF:000141">
    <property type="entry name" value="Zinc metalloproteinase nas-24"/>
    <property type="match status" value="1"/>
</dbReference>
<dbReference type="Gene3D" id="3.40.390.10">
    <property type="entry name" value="Collagenase (Catalytic Domain)"/>
    <property type="match status" value="1"/>
</dbReference>
<dbReference type="InterPro" id="IPR024079">
    <property type="entry name" value="MetalloPept_cat_dom_sf"/>
</dbReference>
<dbReference type="InterPro" id="IPR017050">
    <property type="entry name" value="Metallopeptidase_nem"/>
</dbReference>
<dbReference type="InterPro" id="IPR001506">
    <property type="entry name" value="Peptidase_M12A"/>
</dbReference>
<dbReference type="InterPro" id="IPR006026">
    <property type="entry name" value="Peptidase_Metallo"/>
</dbReference>
<dbReference type="PANTHER" id="PTHR10127">
    <property type="entry name" value="DISCOIDIN, CUB, EGF, LAMININ , AND ZINC METALLOPROTEASE DOMAIN CONTAINING"/>
    <property type="match status" value="1"/>
</dbReference>
<dbReference type="PANTHER" id="PTHR10127:SF857">
    <property type="entry name" value="ZINC METALLOPROTEINASE NAS-19-RELATED"/>
    <property type="match status" value="1"/>
</dbReference>
<dbReference type="Pfam" id="PF01400">
    <property type="entry name" value="Astacin"/>
    <property type="match status" value="1"/>
</dbReference>
<dbReference type="PIRSF" id="PIRSF036365">
    <property type="entry name" value="Astacin_nematoda"/>
    <property type="match status" value="1"/>
</dbReference>
<dbReference type="PRINTS" id="PR00480">
    <property type="entry name" value="ASTACIN"/>
</dbReference>
<dbReference type="SMART" id="SM00235">
    <property type="entry name" value="ZnMc"/>
    <property type="match status" value="1"/>
</dbReference>
<dbReference type="SUPFAM" id="SSF55486">
    <property type="entry name" value="Metalloproteases ('zincins'), catalytic domain"/>
    <property type="match status" value="1"/>
</dbReference>
<dbReference type="PROSITE" id="PS51864">
    <property type="entry name" value="ASTACIN"/>
    <property type="match status" value="1"/>
</dbReference>
<dbReference type="PROSITE" id="PS00022">
    <property type="entry name" value="EGF_1"/>
    <property type="match status" value="1"/>
</dbReference>
<dbReference type="PROSITE" id="PS01186">
    <property type="entry name" value="EGF_2"/>
    <property type="match status" value="1"/>
</dbReference>
<dbReference type="PROSITE" id="PS00142">
    <property type="entry name" value="ZINC_PROTEASE"/>
    <property type="match status" value="1"/>
</dbReference>
<feature type="signal peptide" evidence="3">
    <location>
        <begin position="1"/>
        <end position="20"/>
    </location>
</feature>
<feature type="propeptide" id="PRO_0000442666" evidence="5">
    <location>
        <begin position="21"/>
        <end status="unknown"/>
    </location>
</feature>
<feature type="chain" id="PRO_0000028923" description="Zinc metalloproteinase nas-19">
    <location>
        <begin status="unknown"/>
        <end position="396"/>
    </location>
</feature>
<feature type="domain" description="Peptidase M12A" evidence="4">
    <location>
        <begin position="38"/>
        <end position="231"/>
    </location>
</feature>
<feature type="domain" description="EGF-like">
    <location>
        <begin position="225"/>
        <end position="264"/>
    </location>
</feature>
<feature type="active site" evidence="4">
    <location>
        <position position="139"/>
    </location>
</feature>
<feature type="binding site" evidence="4">
    <location>
        <position position="138"/>
    </location>
    <ligand>
        <name>Zn(2+)</name>
        <dbReference type="ChEBI" id="CHEBI:29105"/>
        <note>catalytic</note>
    </ligand>
</feature>
<feature type="binding site" evidence="4">
    <location>
        <position position="142"/>
    </location>
    <ligand>
        <name>Zn(2+)</name>
        <dbReference type="ChEBI" id="CHEBI:29105"/>
        <note>catalytic</note>
    </ligand>
</feature>
<feature type="binding site" evidence="4">
    <location>
        <position position="148"/>
    </location>
    <ligand>
        <name>Zn(2+)</name>
        <dbReference type="ChEBI" id="CHEBI:29105"/>
        <note>catalytic</note>
    </ligand>
</feature>
<feature type="glycosylation site" description="N-linked (GlcNAc...) asparagine" evidence="3">
    <location>
        <position position="79"/>
    </location>
</feature>
<feature type="glycosylation site" description="N-linked (GlcNAc...) asparagine" evidence="3">
    <location>
        <position position="310"/>
    </location>
</feature>
<feature type="disulfide bond" evidence="4">
    <location>
        <begin position="82"/>
        <end position="230"/>
    </location>
</feature>
<feature type="disulfide bond" evidence="4">
    <location>
        <begin position="105"/>
        <end position="130"/>
    </location>
</feature>
<feature type="disulfide bond" evidence="1">
    <location>
        <begin position="232"/>
        <end position="252"/>
    </location>
</feature>
<feature type="disulfide bond" evidence="1">
    <location>
        <begin position="254"/>
        <end position="263"/>
    </location>
</feature>
<organism>
    <name type="scientific">Caenorhabditis elegans</name>
    <dbReference type="NCBI Taxonomy" id="6239"/>
    <lineage>
        <taxon>Eukaryota</taxon>
        <taxon>Metazoa</taxon>
        <taxon>Ecdysozoa</taxon>
        <taxon>Nematoda</taxon>
        <taxon>Chromadorea</taxon>
        <taxon>Rhabditida</taxon>
        <taxon>Rhabditina</taxon>
        <taxon>Rhabditomorpha</taxon>
        <taxon>Rhabditoidea</taxon>
        <taxon>Rhabditidae</taxon>
        <taxon>Peloderinae</taxon>
        <taxon>Caenorhabditis</taxon>
    </lineage>
</organism>
<gene>
    <name type="primary">nas-19</name>
    <name type="ORF">K03B8.5</name>
</gene>
<name>NAS19_CAEEL</name>
<reference key="1">
    <citation type="journal article" date="1998" name="Science">
        <title>Genome sequence of the nematode C. elegans: a platform for investigating biology.</title>
        <authorList>
            <consortium name="The C. elegans sequencing consortium"/>
        </authorList>
    </citation>
    <scope>NUCLEOTIDE SEQUENCE [LARGE SCALE GENOMIC DNA]</scope>
    <source>
        <strain>Bristol N2</strain>
    </source>
</reference>
<reference key="2">
    <citation type="journal article" date="2003" name="Eur. J. Biochem.">
        <title>The astacin protein family in Caenorhabditis elegans.</title>
        <authorList>
            <person name="Moehrlen F."/>
            <person name="Hutter H."/>
            <person name="Zwilling R."/>
        </authorList>
    </citation>
    <scope>NUCLEOTIDE SEQUENCE [MRNA] OF 103-135</scope>
    <scope>NOMENCLATURE</scope>
    <source>
        <strain>Bristol N2</strain>
    </source>
</reference>
<protein>
    <recommendedName>
        <fullName>Zinc metalloproteinase nas-19</fullName>
        <ecNumber evidence="2">3.4.24.-</ecNumber>
    </recommendedName>
    <alternativeName>
        <fullName>Nematode astacin 19</fullName>
    </alternativeName>
</protein>
<comment type="function">
    <text evidence="2">Metalloprotease.</text>
</comment>
<comment type="cofactor">
    <cofactor evidence="4">
        <name>Zn(2+)</name>
        <dbReference type="ChEBI" id="CHEBI:29105"/>
    </cofactor>
    <text evidence="4">Binds 1 zinc ion per subunit.</text>
</comment>
<comment type="subcellular location">
    <subcellularLocation>
        <location evidence="5">Secreted</location>
    </subcellularLocation>
</comment>
<evidence type="ECO:0000250" key="1"/>
<evidence type="ECO:0000250" key="2">
    <source>
        <dbReference type="UniProtKB" id="A8Q2D1"/>
    </source>
</evidence>
<evidence type="ECO:0000255" key="3"/>
<evidence type="ECO:0000255" key="4">
    <source>
        <dbReference type="PROSITE-ProRule" id="PRU01211"/>
    </source>
</evidence>
<evidence type="ECO:0000305" key="5"/>
<keyword id="KW-1015">Disulfide bond</keyword>
<keyword id="KW-0245">EGF-like domain</keyword>
<keyword id="KW-0325">Glycoprotein</keyword>
<keyword id="KW-0378">Hydrolase</keyword>
<keyword id="KW-0479">Metal-binding</keyword>
<keyword id="KW-0482">Metalloprotease</keyword>
<keyword id="KW-0645">Protease</keyword>
<keyword id="KW-1185">Reference proteome</keyword>
<keyword id="KW-0964">Secreted</keyword>
<keyword id="KW-0732">Signal</keyword>
<keyword id="KW-0862">Zinc</keyword>
<keyword id="KW-0865">Zymogen</keyword>
<accession>Q21181</accession>
<accession>Q7Z0N0</accession>
<sequence length="396" mass="45162">MVRLIHLIGAIILLFSYAYCGLSRLNEHDIEESYSHKRVKRQFERLGTKWSYGVVNYYYADKNNEIKEMVESAIAYIANHTCIRFNEDQNAVQRVQIRMQQNWLCQSTVGAPGMSMSKPIGELSMLVQSCDTIGSIVHEFSHSLGRFHEHTRPDRDNFMKVTTTVHEARPRPSGMTTMYGPFEHGSVMMYHADTYGPGTMDPLDMDYKQTMGNRRVTFYDMYKINQYYGCWCSKQLECKNGGYTSPSDCSRCNCPKGFFGNLCDERQQDSYELMAVNNLWQSITIPFAYKPEPGSDGFYSTFVYITGKANSTIEITLEGLQDVICTAGCTVNGVEIKFKEDSKITSPVVCCTDKPPYKNVFKSSHNPTIIELYSRTTLPSAVTFKYRFTNDKVVLG</sequence>
<proteinExistence type="evidence at transcript level"/>